<sequence length="498" mass="55626">MEKYILSIDQGTTSSRAILFNQKGEIAGVAQREFKQYFPQSGWVEHDANEIWTSVLAVMTEVINENDVRADQIAGIGITNQRETTVVWDKHTGRPIYHAIVWQSRQTQSICSELKQQGYEQTFRDKTGLLLDPYFAGTKVKWILDNVEGAREKAENGDLLFGTIDTWLVWKLSGKAAHITDYSNASRTLMFNIHDLEWDDELLELLTVPKNMLPEVKASSEVYGKTIDYHFYGQEVPIAGVAGDQQAALFGQACFERGDVKNTYGTGGFMLMNTGDKAVKSESGLLTTIAYGIDGKVNYALEGSIFVSGSAIQWLRDGLRMINSAPQSESYATRVDSTEGVYVVPAFVGLGTPYWDSEARGAIFGLTRGTEKEHFIRATLESLCYQTRDVMEAMSKDSGIDVQSLRVDGGAVKNNFIMQFQADIVNTSVERPEIQETTALGAAFLAGLAVGFWESKDDIAKNWKLEEKFDPKMDEGEREKLYRGWKKAVEATQVFKTE</sequence>
<protein>
    <recommendedName>
        <fullName evidence="1">Glycerol kinase</fullName>
        <ecNumber evidence="1">2.7.1.30</ecNumber>
    </recommendedName>
    <alternativeName>
        <fullName evidence="1">ATP:glycerol 3-phosphotransferase</fullName>
    </alternativeName>
    <alternativeName>
        <fullName evidence="1">Glycerokinase</fullName>
        <shortName evidence="1">GK</shortName>
    </alternativeName>
</protein>
<dbReference type="EC" id="2.7.1.30" evidence="1"/>
<dbReference type="EMBL" id="CP000253">
    <property type="protein sequence ID" value="ABD30377.1"/>
    <property type="molecule type" value="Genomic_DNA"/>
</dbReference>
<dbReference type="RefSeq" id="WP_000417369.1">
    <property type="nucleotide sequence ID" value="NZ_LS483365.1"/>
</dbReference>
<dbReference type="RefSeq" id="YP_499809.1">
    <property type="nucleotide sequence ID" value="NC_007795.1"/>
</dbReference>
<dbReference type="SMR" id="Q2FYZ5"/>
<dbReference type="STRING" id="93061.SAOUHSC_01276"/>
<dbReference type="PaxDb" id="1280-SAXN108_1305"/>
<dbReference type="GeneID" id="3919929"/>
<dbReference type="KEGG" id="sao:SAOUHSC_01276"/>
<dbReference type="PATRIC" id="fig|93061.5.peg.1170"/>
<dbReference type="eggNOG" id="COG0554">
    <property type="taxonomic scope" value="Bacteria"/>
</dbReference>
<dbReference type="HOGENOM" id="CLU_009281_2_3_9"/>
<dbReference type="OrthoDB" id="9805576at2"/>
<dbReference type="UniPathway" id="UPA00618">
    <property type="reaction ID" value="UER00672"/>
</dbReference>
<dbReference type="PRO" id="PR:Q2FYZ5"/>
<dbReference type="Proteomes" id="UP000008816">
    <property type="component" value="Chromosome"/>
</dbReference>
<dbReference type="GO" id="GO:0005829">
    <property type="term" value="C:cytosol"/>
    <property type="evidence" value="ECO:0000318"/>
    <property type="project" value="GO_Central"/>
</dbReference>
<dbReference type="GO" id="GO:0005524">
    <property type="term" value="F:ATP binding"/>
    <property type="evidence" value="ECO:0007669"/>
    <property type="project" value="UniProtKB-UniRule"/>
</dbReference>
<dbReference type="GO" id="GO:0004370">
    <property type="term" value="F:glycerol kinase activity"/>
    <property type="evidence" value="ECO:0000250"/>
    <property type="project" value="UniProtKB"/>
</dbReference>
<dbReference type="GO" id="GO:0019563">
    <property type="term" value="P:glycerol catabolic process"/>
    <property type="evidence" value="ECO:0000318"/>
    <property type="project" value="GO_Central"/>
</dbReference>
<dbReference type="GO" id="GO:0006071">
    <property type="term" value="P:glycerol metabolic process"/>
    <property type="evidence" value="ECO:0000250"/>
    <property type="project" value="UniProtKB"/>
</dbReference>
<dbReference type="GO" id="GO:0006072">
    <property type="term" value="P:glycerol-3-phosphate metabolic process"/>
    <property type="evidence" value="ECO:0007669"/>
    <property type="project" value="InterPro"/>
</dbReference>
<dbReference type="CDD" id="cd07786">
    <property type="entry name" value="FGGY_EcGK_like"/>
    <property type="match status" value="1"/>
</dbReference>
<dbReference type="FunFam" id="3.30.420.40:FF:000007">
    <property type="entry name" value="Glycerol kinase"/>
    <property type="match status" value="1"/>
</dbReference>
<dbReference type="FunFam" id="3.30.420.40:FF:000008">
    <property type="entry name" value="Glycerol kinase"/>
    <property type="match status" value="1"/>
</dbReference>
<dbReference type="Gene3D" id="3.30.420.40">
    <property type="match status" value="2"/>
</dbReference>
<dbReference type="HAMAP" id="MF_00186">
    <property type="entry name" value="Glycerol_kin"/>
    <property type="match status" value="1"/>
</dbReference>
<dbReference type="InterPro" id="IPR043129">
    <property type="entry name" value="ATPase_NBD"/>
</dbReference>
<dbReference type="InterPro" id="IPR000577">
    <property type="entry name" value="Carb_kinase_FGGY"/>
</dbReference>
<dbReference type="InterPro" id="IPR018483">
    <property type="entry name" value="Carb_kinase_FGGY_CS"/>
</dbReference>
<dbReference type="InterPro" id="IPR018485">
    <property type="entry name" value="FGGY_C"/>
</dbReference>
<dbReference type="InterPro" id="IPR018484">
    <property type="entry name" value="FGGY_N"/>
</dbReference>
<dbReference type="InterPro" id="IPR005999">
    <property type="entry name" value="Glycerol_kin"/>
</dbReference>
<dbReference type="NCBIfam" id="TIGR01311">
    <property type="entry name" value="glycerol_kin"/>
    <property type="match status" value="1"/>
</dbReference>
<dbReference type="NCBIfam" id="NF000756">
    <property type="entry name" value="PRK00047.1"/>
    <property type="match status" value="1"/>
</dbReference>
<dbReference type="PANTHER" id="PTHR10196:SF69">
    <property type="entry name" value="GLYCEROL KINASE"/>
    <property type="match status" value="1"/>
</dbReference>
<dbReference type="PANTHER" id="PTHR10196">
    <property type="entry name" value="SUGAR KINASE"/>
    <property type="match status" value="1"/>
</dbReference>
<dbReference type="Pfam" id="PF02782">
    <property type="entry name" value="FGGY_C"/>
    <property type="match status" value="1"/>
</dbReference>
<dbReference type="Pfam" id="PF00370">
    <property type="entry name" value="FGGY_N"/>
    <property type="match status" value="1"/>
</dbReference>
<dbReference type="PIRSF" id="PIRSF000538">
    <property type="entry name" value="GlpK"/>
    <property type="match status" value="1"/>
</dbReference>
<dbReference type="SUPFAM" id="SSF53067">
    <property type="entry name" value="Actin-like ATPase domain"/>
    <property type="match status" value="2"/>
</dbReference>
<dbReference type="PROSITE" id="PS00445">
    <property type="entry name" value="FGGY_KINASES_2"/>
    <property type="match status" value="1"/>
</dbReference>
<feature type="chain" id="PRO_1000020793" description="Glycerol kinase">
    <location>
        <begin position="1"/>
        <end position="498"/>
    </location>
</feature>
<feature type="binding site" evidence="1">
    <location>
        <position position="12"/>
    </location>
    <ligand>
        <name>ADP</name>
        <dbReference type="ChEBI" id="CHEBI:456216"/>
    </ligand>
</feature>
<feature type="binding site" evidence="1">
    <location>
        <position position="12"/>
    </location>
    <ligand>
        <name>ATP</name>
        <dbReference type="ChEBI" id="CHEBI:30616"/>
    </ligand>
</feature>
<feature type="binding site" evidence="1">
    <location>
        <position position="12"/>
    </location>
    <ligand>
        <name>sn-glycerol 3-phosphate</name>
        <dbReference type="ChEBI" id="CHEBI:57597"/>
    </ligand>
</feature>
<feature type="binding site" evidence="1">
    <location>
        <position position="13"/>
    </location>
    <ligand>
        <name>ATP</name>
        <dbReference type="ChEBI" id="CHEBI:30616"/>
    </ligand>
</feature>
<feature type="binding site" evidence="1">
    <location>
        <position position="14"/>
    </location>
    <ligand>
        <name>ATP</name>
        <dbReference type="ChEBI" id="CHEBI:30616"/>
    </ligand>
</feature>
<feature type="binding site" evidence="1">
    <location>
        <position position="16"/>
    </location>
    <ligand>
        <name>ADP</name>
        <dbReference type="ChEBI" id="CHEBI:456216"/>
    </ligand>
</feature>
<feature type="binding site" evidence="1">
    <location>
        <position position="82"/>
    </location>
    <ligand>
        <name>glycerol</name>
        <dbReference type="ChEBI" id="CHEBI:17754"/>
    </ligand>
</feature>
<feature type="binding site" evidence="1">
    <location>
        <position position="82"/>
    </location>
    <ligand>
        <name>sn-glycerol 3-phosphate</name>
        <dbReference type="ChEBI" id="CHEBI:57597"/>
    </ligand>
</feature>
<feature type="binding site" evidence="1">
    <location>
        <position position="83"/>
    </location>
    <ligand>
        <name>glycerol</name>
        <dbReference type="ChEBI" id="CHEBI:17754"/>
    </ligand>
</feature>
<feature type="binding site" evidence="1">
    <location>
        <position position="83"/>
    </location>
    <ligand>
        <name>sn-glycerol 3-phosphate</name>
        <dbReference type="ChEBI" id="CHEBI:57597"/>
    </ligand>
</feature>
<feature type="binding site" evidence="1">
    <location>
        <position position="134"/>
    </location>
    <ligand>
        <name>glycerol</name>
        <dbReference type="ChEBI" id="CHEBI:17754"/>
    </ligand>
</feature>
<feature type="binding site" evidence="1">
    <location>
        <position position="134"/>
    </location>
    <ligand>
        <name>sn-glycerol 3-phosphate</name>
        <dbReference type="ChEBI" id="CHEBI:57597"/>
    </ligand>
</feature>
<feature type="binding site" evidence="1">
    <location>
        <position position="244"/>
    </location>
    <ligand>
        <name>glycerol</name>
        <dbReference type="ChEBI" id="CHEBI:17754"/>
    </ligand>
</feature>
<feature type="binding site" evidence="1">
    <location>
        <position position="244"/>
    </location>
    <ligand>
        <name>sn-glycerol 3-phosphate</name>
        <dbReference type="ChEBI" id="CHEBI:57597"/>
    </ligand>
</feature>
<feature type="binding site" evidence="1">
    <location>
        <position position="245"/>
    </location>
    <ligand>
        <name>glycerol</name>
        <dbReference type="ChEBI" id="CHEBI:17754"/>
    </ligand>
</feature>
<feature type="binding site" evidence="1">
    <location>
        <position position="266"/>
    </location>
    <ligand>
        <name>ADP</name>
        <dbReference type="ChEBI" id="CHEBI:456216"/>
    </ligand>
</feature>
<feature type="binding site" evidence="1">
    <location>
        <position position="266"/>
    </location>
    <ligand>
        <name>ATP</name>
        <dbReference type="ChEBI" id="CHEBI:30616"/>
    </ligand>
</feature>
<feature type="binding site" evidence="1">
    <location>
        <position position="309"/>
    </location>
    <ligand>
        <name>ADP</name>
        <dbReference type="ChEBI" id="CHEBI:456216"/>
    </ligand>
</feature>
<feature type="binding site" evidence="1">
    <location>
        <position position="309"/>
    </location>
    <ligand>
        <name>ATP</name>
        <dbReference type="ChEBI" id="CHEBI:30616"/>
    </ligand>
</feature>
<feature type="binding site" evidence="1">
    <location>
        <position position="313"/>
    </location>
    <ligand>
        <name>ATP</name>
        <dbReference type="ChEBI" id="CHEBI:30616"/>
    </ligand>
</feature>
<feature type="binding site" evidence="1">
    <location>
        <position position="410"/>
    </location>
    <ligand>
        <name>ADP</name>
        <dbReference type="ChEBI" id="CHEBI:456216"/>
    </ligand>
</feature>
<feature type="binding site" evidence="1">
    <location>
        <position position="410"/>
    </location>
    <ligand>
        <name>ATP</name>
        <dbReference type="ChEBI" id="CHEBI:30616"/>
    </ligand>
</feature>
<feature type="binding site" evidence="1">
    <location>
        <position position="414"/>
    </location>
    <ligand>
        <name>ADP</name>
        <dbReference type="ChEBI" id="CHEBI:456216"/>
    </ligand>
</feature>
<feature type="modified residue" description="Phosphohistidine; by HPr" evidence="1">
    <location>
        <position position="230"/>
    </location>
</feature>
<keyword id="KW-0067">ATP-binding</keyword>
<keyword id="KW-0319">Glycerol metabolism</keyword>
<keyword id="KW-0418">Kinase</keyword>
<keyword id="KW-0547">Nucleotide-binding</keyword>
<keyword id="KW-0597">Phosphoprotein</keyword>
<keyword id="KW-1185">Reference proteome</keyword>
<keyword id="KW-0808">Transferase</keyword>
<gene>
    <name evidence="1" type="primary">glpK</name>
    <name type="ordered locus">SAOUHSC_01276</name>
</gene>
<comment type="function">
    <text evidence="1">Key enzyme in the regulation of glycerol uptake and metabolism. Catalyzes the phosphorylation of glycerol to yield sn-glycerol 3-phosphate.</text>
</comment>
<comment type="catalytic activity">
    <reaction evidence="1">
        <text>glycerol + ATP = sn-glycerol 3-phosphate + ADP + H(+)</text>
        <dbReference type="Rhea" id="RHEA:21644"/>
        <dbReference type="ChEBI" id="CHEBI:15378"/>
        <dbReference type="ChEBI" id="CHEBI:17754"/>
        <dbReference type="ChEBI" id="CHEBI:30616"/>
        <dbReference type="ChEBI" id="CHEBI:57597"/>
        <dbReference type="ChEBI" id="CHEBI:456216"/>
        <dbReference type="EC" id="2.7.1.30"/>
    </reaction>
</comment>
<comment type="activity regulation">
    <text evidence="1">Activated by phosphorylation and inhibited by fructose 1,6-bisphosphate (FBP).</text>
</comment>
<comment type="pathway">
    <text evidence="1">Polyol metabolism; glycerol degradation via glycerol kinase pathway; sn-glycerol 3-phosphate from glycerol: step 1/1.</text>
</comment>
<comment type="subunit">
    <text evidence="1">Homotetramer and homodimer (in equilibrium).</text>
</comment>
<comment type="PTM">
    <text evidence="1">The phosphoenolpyruvate-dependent sugar phosphotransferase system (PTS), including enzyme I, and histidine-containing protein (HPr) are required for the phosphorylation, which leads to the activation of the enzyme.</text>
</comment>
<comment type="similarity">
    <text evidence="1">Belongs to the FGGY kinase family.</text>
</comment>
<evidence type="ECO:0000255" key="1">
    <source>
        <dbReference type="HAMAP-Rule" id="MF_00186"/>
    </source>
</evidence>
<reference key="1">
    <citation type="book" date="2006" name="Gram positive pathogens, 2nd edition">
        <title>The Staphylococcus aureus NCTC 8325 genome.</title>
        <editorList>
            <person name="Fischetti V."/>
            <person name="Novick R."/>
            <person name="Ferretti J."/>
            <person name="Portnoy D."/>
            <person name="Rood J."/>
        </editorList>
        <authorList>
            <person name="Gillaspy A.F."/>
            <person name="Worrell V."/>
            <person name="Orvis J."/>
            <person name="Roe B.A."/>
            <person name="Dyer D.W."/>
            <person name="Iandolo J.J."/>
        </authorList>
    </citation>
    <scope>NUCLEOTIDE SEQUENCE [LARGE SCALE GENOMIC DNA]</scope>
    <source>
        <strain>NCTC 8325 / PS 47</strain>
    </source>
</reference>
<name>GLPK_STAA8</name>
<organism>
    <name type="scientific">Staphylococcus aureus (strain NCTC 8325 / PS 47)</name>
    <dbReference type="NCBI Taxonomy" id="93061"/>
    <lineage>
        <taxon>Bacteria</taxon>
        <taxon>Bacillati</taxon>
        <taxon>Bacillota</taxon>
        <taxon>Bacilli</taxon>
        <taxon>Bacillales</taxon>
        <taxon>Staphylococcaceae</taxon>
        <taxon>Staphylococcus</taxon>
    </lineage>
</organism>
<accession>Q2FYZ5</accession>
<proteinExistence type="inferred from homology"/>